<comment type="function">
    <text evidence="1">Involved in cognitive function in the brain, possibly via the noradrenergic system.</text>
</comment>
<comment type="interaction">
    <interactant intactId="EBI-18292412">
        <id>Q6ZR62</id>
    </interactant>
    <interactant intactId="EBI-712648">
        <id>O95994</id>
        <label>AGR2</label>
    </interactant>
    <organismsDiffer>false</organismsDiffer>
    <experiments>3</experiments>
</comment>
<comment type="miscellaneous">
    <text evidence="5">RTL4 is one of at least 11 genes called Mar or Mart related to long terminal repeat retrotransposons. They do not correspond to functional retrotransposons, but rather to neofunctionalized retrotransposons genes.</text>
</comment>
<protein>
    <recommendedName>
        <fullName evidence="7">Retrotransposon Gag-like protein 4</fullName>
    </recommendedName>
    <alternativeName>
        <fullName evidence="1">Mammalian retrotransposon-derived protein 4</fullName>
    </alternativeName>
    <alternativeName>
        <fullName>Zinc finger CCHC domain-containing protein 16</fullName>
    </alternativeName>
</protein>
<keyword id="KW-0479">Metal-binding</keyword>
<keyword id="KW-1185">Reference proteome</keyword>
<keyword id="KW-0862">Zinc</keyword>
<keyword id="KW-0863">Zinc-finger</keyword>
<reference key="1">
    <citation type="journal article" date="2004" name="Nat. Genet.">
        <title>Complete sequencing and characterization of 21,243 full-length human cDNAs.</title>
        <authorList>
            <person name="Ota T."/>
            <person name="Suzuki Y."/>
            <person name="Nishikawa T."/>
            <person name="Otsuki T."/>
            <person name="Sugiyama T."/>
            <person name="Irie R."/>
            <person name="Wakamatsu A."/>
            <person name="Hayashi K."/>
            <person name="Sato H."/>
            <person name="Nagai K."/>
            <person name="Kimura K."/>
            <person name="Makita H."/>
            <person name="Sekine M."/>
            <person name="Obayashi M."/>
            <person name="Nishi T."/>
            <person name="Shibahara T."/>
            <person name="Tanaka T."/>
            <person name="Ishii S."/>
            <person name="Yamamoto J."/>
            <person name="Saito K."/>
            <person name="Kawai Y."/>
            <person name="Isono Y."/>
            <person name="Nakamura Y."/>
            <person name="Nagahari K."/>
            <person name="Murakami K."/>
            <person name="Yasuda T."/>
            <person name="Iwayanagi T."/>
            <person name="Wagatsuma M."/>
            <person name="Shiratori A."/>
            <person name="Sudo H."/>
            <person name="Hosoiri T."/>
            <person name="Kaku Y."/>
            <person name="Kodaira H."/>
            <person name="Kondo H."/>
            <person name="Sugawara M."/>
            <person name="Takahashi M."/>
            <person name="Kanda K."/>
            <person name="Yokoi T."/>
            <person name="Furuya T."/>
            <person name="Kikkawa E."/>
            <person name="Omura Y."/>
            <person name="Abe K."/>
            <person name="Kamihara K."/>
            <person name="Katsuta N."/>
            <person name="Sato K."/>
            <person name="Tanikawa M."/>
            <person name="Yamazaki M."/>
            <person name="Ninomiya K."/>
            <person name="Ishibashi T."/>
            <person name="Yamashita H."/>
            <person name="Murakawa K."/>
            <person name="Fujimori K."/>
            <person name="Tanai H."/>
            <person name="Kimata M."/>
            <person name="Watanabe M."/>
            <person name="Hiraoka S."/>
            <person name="Chiba Y."/>
            <person name="Ishida S."/>
            <person name="Ono Y."/>
            <person name="Takiguchi S."/>
            <person name="Watanabe S."/>
            <person name="Yosida M."/>
            <person name="Hotuta T."/>
            <person name="Kusano J."/>
            <person name="Kanehori K."/>
            <person name="Takahashi-Fujii A."/>
            <person name="Hara H."/>
            <person name="Tanase T.-O."/>
            <person name="Nomura Y."/>
            <person name="Togiya S."/>
            <person name="Komai F."/>
            <person name="Hara R."/>
            <person name="Takeuchi K."/>
            <person name="Arita M."/>
            <person name="Imose N."/>
            <person name="Musashino K."/>
            <person name="Yuuki H."/>
            <person name="Oshima A."/>
            <person name="Sasaki N."/>
            <person name="Aotsuka S."/>
            <person name="Yoshikawa Y."/>
            <person name="Matsunawa H."/>
            <person name="Ichihara T."/>
            <person name="Shiohata N."/>
            <person name="Sano S."/>
            <person name="Moriya S."/>
            <person name="Momiyama H."/>
            <person name="Satoh N."/>
            <person name="Takami S."/>
            <person name="Terashima Y."/>
            <person name="Suzuki O."/>
            <person name="Nakagawa S."/>
            <person name="Senoh A."/>
            <person name="Mizoguchi H."/>
            <person name="Goto Y."/>
            <person name="Shimizu F."/>
            <person name="Wakebe H."/>
            <person name="Hishigaki H."/>
            <person name="Watanabe T."/>
            <person name="Sugiyama A."/>
            <person name="Takemoto M."/>
            <person name="Kawakami B."/>
            <person name="Yamazaki M."/>
            <person name="Watanabe K."/>
            <person name="Kumagai A."/>
            <person name="Itakura S."/>
            <person name="Fukuzumi Y."/>
            <person name="Fujimori Y."/>
            <person name="Komiyama M."/>
            <person name="Tashiro H."/>
            <person name="Tanigami A."/>
            <person name="Fujiwara T."/>
            <person name="Ono T."/>
            <person name="Yamada K."/>
            <person name="Fujii Y."/>
            <person name="Ozaki K."/>
            <person name="Hirao M."/>
            <person name="Ohmori Y."/>
            <person name="Kawabata A."/>
            <person name="Hikiji T."/>
            <person name="Kobatake N."/>
            <person name="Inagaki H."/>
            <person name="Ikema Y."/>
            <person name="Okamoto S."/>
            <person name="Okitani R."/>
            <person name="Kawakami T."/>
            <person name="Noguchi S."/>
            <person name="Itoh T."/>
            <person name="Shigeta K."/>
            <person name="Senba T."/>
            <person name="Matsumura K."/>
            <person name="Nakajima Y."/>
            <person name="Mizuno T."/>
            <person name="Morinaga M."/>
            <person name="Sasaki M."/>
            <person name="Togashi T."/>
            <person name="Oyama M."/>
            <person name="Hata H."/>
            <person name="Watanabe M."/>
            <person name="Komatsu T."/>
            <person name="Mizushima-Sugano J."/>
            <person name="Satoh T."/>
            <person name="Shirai Y."/>
            <person name="Takahashi Y."/>
            <person name="Nakagawa K."/>
            <person name="Okumura K."/>
            <person name="Nagase T."/>
            <person name="Nomura N."/>
            <person name="Kikuchi H."/>
            <person name="Masuho Y."/>
            <person name="Yamashita R."/>
            <person name="Nakai K."/>
            <person name="Yada T."/>
            <person name="Nakamura Y."/>
            <person name="Ohara O."/>
            <person name="Isogai T."/>
            <person name="Sugano S."/>
        </authorList>
    </citation>
    <scope>NUCLEOTIDE SEQUENCE [LARGE SCALE MRNA]</scope>
    <scope>VARIANT PRO-27</scope>
    <source>
        <tissue>Kidney</tissue>
    </source>
</reference>
<reference key="2">
    <citation type="journal article" date="2005" name="Nature">
        <title>The DNA sequence of the human X chromosome.</title>
        <authorList>
            <person name="Ross M.T."/>
            <person name="Grafham D.V."/>
            <person name="Coffey A.J."/>
            <person name="Scherer S."/>
            <person name="McLay K."/>
            <person name="Muzny D."/>
            <person name="Platzer M."/>
            <person name="Howell G.R."/>
            <person name="Burrows C."/>
            <person name="Bird C.P."/>
            <person name="Frankish A."/>
            <person name="Lovell F.L."/>
            <person name="Howe K.L."/>
            <person name="Ashurst J.L."/>
            <person name="Fulton R.S."/>
            <person name="Sudbrak R."/>
            <person name="Wen G."/>
            <person name="Jones M.C."/>
            <person name="Hurles M.E."/>
            <person name="Andrews T.D."/>
            <person name="Scott C.E."/>
            <person name="Searle S."/>
            <person name="Ramser J."/>
            <person name="Whittaker A."/>
            <person name="Deadman R."/>
            <person name="Carter N.P."/>
            <person name="Hunt S.E."/>
            <person name="Chen R."/>
            <person name="Cree A."/>
            <person name="Gunaratne P."/>
            <person name="Havlak P."/>
            <person name="Hodgson A."/>
            <person name="Metzker M.L."/>
            <person name="Richards S."/>
            <person name="Scott G."/>
            <person name="Steffen D."/>
            <person name="Sodergren E."/>
            <person name="Wheeler D.A."/>
            <person name="Worley K.C."/>
            <person name="Ainscough R."/>
            <person name="Ambrose K.D."/>
            <person name="Ansari-Lari M.A."/>
            <person name="Aradhya S."/>
            <person name="Ashwell R.I."/>
            <person name="Babbage A.K."/>
            <person name="Bagguley C.L."/>
            <person name="Ballabio A."/>
            <person name="Banerjee R."/>
            <person name="Barker G.E."/>
            <person name="Barlow K.F."/>
            <person name="Barrett I.P."/>
            <person name="Bates K.N."/>
            <person name="Beare D.M."/>
            <person name="Beasley H."/>
            <person name="Beasley O."/>
            <person name="Beck A."/>
            <person name="Bethel G."/>
            <person name="Blechschmidt K."/>
            <person name="Brady N."/>
            <person name="Bray-Allen S."/>
            <person name="Bridgeman A.M."/>
            <person name="Brown A.J."/>
            <person name="Brown M.J."/>
            <person name="Bonnin D."/>
            <person name="Bruford E.A."/>
            <person name="Buhay C."/>
            <person name="Burch P."/>
            <person name="Burford D."/>
            <person name="Burgess J."/>
            <person name="Burrill W."/>
            <person name="Burton J."/>
            <person name="Bye J.M."/>
            <person name="Carder C."/>
            <person name="Carrel L."/>
            <person name="Chako J."/>
            <person name="Chapman J.C."/>
            <person name="Chavez D."/>
            <person name="Chen E."/>
            <person name="Chen G."/>
            <person name="Chen Y."/>
            <person name="Chen Z."/>
            <person name="Chinault C."/>
            <person name="Ciccodicola A."/>
            <person name="Clark S.Y."/>
            <person name="Clarke G."/>
            <person name="Clee C.M."/>
            <person name="Clegg S."/>
            <person name="Clerc-Blankenburg K."/>
            <person name="Clifford K."/>
            <person name="Cobley V."/>
            <person name="Cole C.G."/>
            <person name="Conquer J.S."/>
            <person name="Corby N."/>
            <person name="Connor R.E."/>
            <person name="David R."/>
            <person name="Davies J."/>
            <person name="Davis C."/>
            <person name="Davis J."/>
            <person name="Delgado O."/>
            <person name="Deshazo D."/>
            <person name="Dhami P."/>
            <person name="Ding Y."/>
            <person name="Dinh H."/>
            <person name="Dodsworth S."/>
            <person name="Draper H."/>
            <person name="Dugan-Rocha S."/>
            <person name="Dunham A."/>
            <person name="Dunn M."/>
            <person name="Durbin K.J."/>
            <person name="Dutta I."/>
            <person name="Eades T."/>
            <person name="Ellwood M."/>
            <person name="Emery-Cohen A."/>
            <person name="Errington H."/>
            <person name="Evans K.L."/>
            <person name="Faulkner L."/>
            <person name="Francis F."/>
            <person name="Frankland J."/>
            <person name="Fraser A.E."/>
            <person name="Galgoczy P."/>
            <person name="Gilbert J."/>
            <person name="Gill R."/>
            <person name="Gloeckner G."/>
            <person name="Gregory S.G."/>
            <person name="Gribble S."/>
            <person name="Griffiths C."/>
            <person name="Grocock R."/>
            <person name="Gu Y."/>
            <person name="Gwilliam R."/>
            <person name="Hamilton C."/>
            <person name="Hart E.A."/>
            <person name="Hawes A."/>
            <person name="Heath P.D."/>
            <person name="Heitmann K."/>
            <person name="Hennig S."/>
            <person name="Hernandez J."/>
            <person name="Hinzmann B."/>
            <person name="Ho S."/>
            <person name="Hoffs M."/>
            <person name="Howden P.J."/>
            <person name="Huckle E.J."/>
            <person name="Hume J."/>
            <person name="Hunt P.J."/>
            <person name="Hunt A.R."/>
            <person name="Isherwood J."/>
            <person name="Jacob L."/>
            <person name="Johnson D."/>
            <person name="Jones S."/>
            <person name="de Jong P.J."/>
            <person name="Joseph S.S."/>
            <person name="Keenan S."/>
            <person name="Kelly S."/>
            <person name="Kershaw J.K."/>
            <person name="Khan Z."/>
            <person name="Kioschis P."/>
            <person name="Klages S."/>
            <person name="Knights A.J."/>
            <person name="Kosiura A."/>
            <person name="Kovar-Smith C."/>
            <person name="Laird G.K."/>
            <person name="Langford C."/>
            <person name="Lawlor S."/>
            <person name="Leversha M."/>
            <person name="Lewis L."/>
            <person name="Liu W."/>
            <person name="Lloyd C."/>
            <person name="Lloyd D.M."/>
            <person name="Loulseged H."/>
            <person name="Loveland J.E."/>
            <person name="Lovell J.D."/>
            <person name="Lozado R."/>
            <person name="Lu J."/>
            <person name="Lyne R."/>
            <person name="Ma J."/>
            <person name="Maheshwari M."/>
            <person name="Matthews L.H."/>
            <person name="McDowall J."/>
            <person name="McLaren S."/>
            <person name="McMurray A."/>
            <person name="Meidl P."/>
            <person name="Meitinger T."/>
            <person name="Milne S."/>
            <person name="Miner G."/>
            <person name="Mistry S.L."/>
            <person name="Morgan M."/>
            <person name="Morris S."/>
            <person name="Mueller I."/>
            <person name="Mullikin J.C."/>
            <person name="Nguyen N."/>
            <person name="Nordsiek G."/>
            <person name="Nyakatura G."/>
            <person name="O'dell C.N."/>
            <person name="Okwuonu G."/>
            <person name="Palmer S."/>
            <person name="Pandian R."/>
            <person name="Parker D."/>
            <person name="Parrish J."/>
            <person name="Pasternak S."/>
            <person name="Patel D."/>
            <person name="Pearce A.V."/>
            <person name="Pearson D.M."/>
            <person name="Pelan S.E."/>
            <person name="Perez L."/>
            <person name="Porter K.M."/>
            <person name="Ramsey Y."/>
            <person name="Reichwald K."/>
            <person name="Rhodes S."/>
            <person name="Ridler K.A."/>
            <person name="Schlessinger D."/>
            <person name="Schueler M.G."/>
            <person name="Sehra H.K."/>
            <person name="Shaw-Smith C."/>
            <person name="Shen H."/>
            <person name="Sheridan E.M."/>
            <person name="Shownkeen R."/>
            <person name="Skuce C.D."/>
            <person name="Smith M.L."/>
            <person name="Sotheran E.C."/>
            <person name="Steingruber H.E."/>
            <person name="Steward C.A."/>
            <person name="Storey R."/>
            <person name="Swann R.M."/>
            <person name="Swarbreck D."/>
            <person name="Tabor P.E."/>
            <person name="Taudien S."/>
            <person name="Taylor T."/>
            <person name="Teague B."/>
            <person name="Thomas K."/>
            <person name="Thorpe A."/>
            <person name="Timms K."/>
            <person name="Tracey A."/>
            <person name="Trevanion S."/>
            <person name="Tromans A.C."/>
            <person name="d'Urso M."/>
            <person name="Verduzco D."/>
            <person name="Villasana D."/>
            <person name="Waldron L."/>
            <person name="Wall M."/>
            <person name="Wang Q."/>
            <person name="Warren J."/>
            <person name="Warry G.L."/>
            <person name="Wei X."/>
            <person name="West A."/>
            <person name="Whitehead S.L."/>
            <person name="Whiteley M.N."/>
            <person name="Wilkinson J.E."/>
            <person name="Willey D.L."/>
            <person name="Williams G."/>
            <person name="Williams L."/>
            <person name="Williamson A."/>
            <person name="Williamson H."/>
            <person name="Wilming L."/>
            <person name="Woodmansey R.L."/>
            <person name="Wray P.W."/>
            <person name="Yen J."/>
            <person name="Zhang J."/>
            <person name="Zhou J."/>
            <person name="Zoghbi H."/>
            <person name="Zorilla S."/>
            <person name="Buck D."/>
            <person name="Reinhardt R."/>
            <person name="Poustka A."/>
            <person name="Rosenthal A."/>
            <person name="Lehrach H."/>
            <person name="Meindl A."/>
            <person name="Minx P.J."/>
            <person name="Hillier L.W."/>
            <person name="Willard H.F."/>
            <person name="Wilson R.K."/>
            <person name="Waterston R.H."/>
            <person name="Rice C.M."/>
            <person name="Vaudin M."/>
            <person name="Coulson A."/>
            <person name="Nelson D.L."/>
            <person name="Weinstock G."/>
            <person name="Sulston J.E."/>
            <person name="Durbin R.M."/>
            <person name="Hubbard T."/>
            <person name="Gibbs R.A."/>
            <person name="Beck S."/>
            <person name="Rogers J."/>
            <person name="Bentley D.R."/>
        </authorList>
    </citation>
    <scope>NUCLEOTIDE SEQUENCE [LARGE SCALE GENOMIC DNA]</scope>
</reference>
<reference key="3">
    <citation type="journal article" date="2004" name="Genome Res.">
        <title>The status, quality, and expansion of the NIH full-length cDNA project: the Mammalian Gene Collection (MGC).</title>
        <authorList>
            <consortium name="The MGC Project Team"/>
        </authorList>
    </citation>
    <scope>NUCLEOTIDE SEQUENCE [LARGE SCALE MRNA]</scope>
    <scope>VARIANT PRO-27</scope>
    <source>
        <tissue>Brain</tissue>
    </source>
</reference>
<reference key="4">
    <citation type="journal article" date="2005" name="Cytogenet. Genome Res.">
        <title>A family of neofunctionalized Ty3/gypsy retrotransposon genes in mammalian genomes.</title>
        <authorList>
            <person name="Brandt J."/>
            <person name="Veith A.-M."/>
            <person name="Volff J.-N."/>
        </authorList>
    </citation>
    <scope>GENE FAMILY</scope>
</reference>
<accession>Q6ZR62</accession>
<accession>B2RPG1</accession>
<sequence>MEKCTKSSSTMQVEPSFLQAENLILRLQMQHPTTENTAKRGQVMPALATTVMPVPYSLEHLTQFHGDPANCSEFLTQVTTYLTALQISNPANDAQIKLFFDYLSQQLESCGIISGPDKSTLLKQYENLILEFQQSFGKPTKQEINPLMNAKFDKGDNSSQQDPATFHLLAQNLICNETNQSGQFEKALADPNQDEESVTDMMDNLPDLITQCIQLDKKHSDRPELLQSETQLPLLASLIQHQALFSPTDPPPKKGPIQLREGQLPLTPAKRARQQETQLCLYCSQSGHFTRDCLAKRSRAPATTNNTAHQ</sequence>
<proteinExistence type="evidence at protein level"/>
<dbReference type="EMBL" id="AK128465">
    <property type="protein sequence ID" value="BAC87453.1"/>
    <property type="molecule type" value="mRNA"/>
</dbReference>
<dbReference type="EMBL" id="BX088563">
    <property type="status" value="NOT_ANNOTATED_CDS"/>
    <property type="molecule type" value="Genomic_DNA"/>
</dbReference>
<dbReference type="EMBL" id="BC137430">
    <property type="protein sequence ID" value="AAI37431.1"/>
    <property type="molecule type" value="mRNA"/>
</dbReference>
<dbReference type="EMBL" id="BC137433">
    <property type="protein sequence ID" value="AAI37434.1"/>
    <property type="molecule type" value="mRNA"/>
</dbReference>
<dbReference type="CCDS" id="CCDS35369.1"/>
<dbReference type="RefSeq" id="NP_001004308.2">
    <property type="nucleotide sequence ID" value="NM_001004308.3"/>
</dbReference>
<dbReference type="RefSeq" id="NP_001382291.1">
    <property type="nucleotide sequence ID" value="NM_001395362.2"/>
</dbReference>
<dbReference type="BioGRID" id="131082">
    <property type="interactions" value="3"/>
</dbReference>
<dbReference type="FunCoup" id="Q6ZR62">
    <property type="interactions" value="1"/>
</dbReference>
<dbReference type="IntAct" id="Q6ZR62">
    <property type="interactions" value="1"/>
</dbReference>
<dbReference type="STRING" id="9606.ENSP00000340590"/>
<dbReference type="iPTMnet" id="Q6ZR62"/>
<dbReference type="PhosphoSitePlus" id="Q6ZR62"/>
<dbReference type="BioMuta" id="RTL4"/>
<dbReference type="DMDM" id="145559545"/>
<dbReference type="PaxDb" id="9606-ENSP00000340590"/>
<dbReference type="Antibodypedia" id="569">
    <property type="antibodies" value="8 antibodies from 7 providers"/>
</dbReference>
<dbReference type="DNASU" id="340595"/>
<dbReference type="Ensembl" id="ENST00000340433.4">
    <property type="protein sequence ID" value="ENSP00000340590.2"/>
    <property type="gene ID" value="ENSG00000187823.4"/>
</dbReference>
<dbReference type="Ensembl" id="ENST00000695808.1">
    <property type="protein sequence ID" value="ENSP00000512188.1"/>
    <property type="gene ID" value="ENSG00000187823.4"/>
</dbReference>
<dbReference type="Ensembl" id="ENST00000695839.1">
    <property type="protein sequence ID" value="ENSP00000512211.1"/>
    <property type="gene ID" value="ENSG00000187823.4"/>
</dbReference>
<dbReference type="GeneID" id="340595"/>
<dbReference type="KEGG" id="hsa:340595"/>
<dbReference type="MANE-Select" id="ENST00000695839.1">
    <property type="protein sequence ID" value="ENSP00000512211.1"/>
    <property type="RefSeq nucleotide sequence ID" value="NM_001395362.2"/>
    <property type="RefSeq protein sequence ID" value="NP_001382291.1"/>
</dbReference>
<dbReference type="UCSC" id="uc065atq.1">
    <property type="organism name" value="human"/>
</dbReference>
<dbReference type="AGR" id="HGNC:25214"/>
<dbReference type="CTD" id="340595"/>
<dbReference type="DisGeNET" id="340595"/>
<dbReference type="GeneCards" id="RTL4"/>
<dbReference type="HGNC" id="HGNC:25214">
    <property type="gene designation" value="RTL4"/>
</dbReference>
<dbReference type="HPA" id="ENSG00000187823">
    <property type="expression patterns" value="Not detected"/>
</dbReference>
<dbReference type="MIM" id="301131">
    <property type="type" value="gene"/>
</dbReference>
<dbReference type="neXtProt" id="NX_Q6ZR62"/>
<dbReference type="OpenTargets" id="ENSG00000187823"/>
<dbReference type="PharmGKB" id="PA142670538"/>
<dbReference type="VEuPathDB" id="HostDB:ENSG00000187823"/>
<dbReference type="eggNOG" id="ENOG502T727">
    <property type="taxonomic scope" value="Eukaryota"/>
</dbReference>
<dbReference type="GeneTree" id="ENSGT00940000163925"/>
<dbReference type="HOGENOM" id="CLU_000384_20_1_1"/>
<dbReference type="InParanoid" id="Q6ZR62"/>
<dbReference type="OMA" id="MMDNLPD"/>
<dbReference type="OrthoDB" id="9516558at2759"/>
<dbReference type="PAN-GO" id="Q6ZR62">
    <property type="GO annotations" value="0 GO annotations based on evolutionary models"/>
</dbReference>
<dbReference type="PhylomeDB" id="Q6ZR62"/>
<dbReference type="TreeFam" id="TF335133"/>
<dbReference type="PathwayCommons" id="Q6ZR62"/>
<dbReference type="SignaLink" id="Q6ZR62"/>
<dbReference type="BioGRID-ORCS" id="340595">
    <property type="hits" value="9 hits in 755 CRISPR screens"/>
</dbReference>
<dbReference type="ChiTaRS" id="RTL4">
    <property type="organism name" value="human"/>
</dbReference>
<dbReference type="GenomeRNAi" id="340595"/>
<dbReference type="Pharos" id="Q6ZR62">
    <property type="development level" value="Tdark"/>
</dbReference>
<dbReference type="PRO" id="PR:Q6ZR62"/>
<dbReference type="Proteomes" id="UP000005640">
    <property type="component" value="Chromosome X"/>
</dbReference>
<dbReference type="RNAct" id="Q6ZR62">
    <property type="molecule type" value="protein"/>
</dbReference>
<dbReference type="Bgee" id="ENSG00000187823">
    <property type="expression patterns" value="Expressed in primordial germ cell in gonad and 16 other cell types or tissues"/>
</dbReference>
<dbReference type="GO" id="GO:0003676">
    <property type="term" value="F:nucleic acid binding"/>
    <property type="evidence" value="ECO:0007669"/>
    <property type="project" value="InterPro"/>
</dbReference>
<dbReference type="GO" id="GO:0008270">
    <property type="term" value="F:zinc ion binding"/>
    <property type="evidence" value="ECO:0007669"/>
    <property type="project" value="UniProtKB-KW"/>
</dbReference>
<dbReference type="GO" id="GO:0050890">
    <property type="term" value="P:cognition"/>
    <property type="evidence" value="ECO:0007669"/>
    <property type="project" value="Ensembl"/>
</dbReference>
<dbReference type="GO" id="GO:0042415">
    <property type="term" value="P:norepinephrine metabolic process"/>
    <property type="evidence" value="ECO:0007669"/>
    <property type="project" value="Ensembl"/>
</dbReference>
<dbReference type="InterPro" id="IPR032567">
    <property type="entry name" value="RTL1-rel"/>
</dbReference>
<dbReference type="InterPro" id="IPR001878">
    <property type="entry name" value="Znf_CCHC"/>
</dbReference>
<dbReference type="InterPro" id="IPR036875">
    <property type="entry name" value="Znf_CCHC_sf"/>
</dbReference>
<dbReference type="PANTHER" id="PTHR15503">
    <property type="entry name" value="LDOC1 RELATED"/>
    <property type="match status" value="1"/>
</dbReference>
<dbReference type="PANTHER" id="PTHR15503:SF8">
    <property type="entry name" value="RETROTRANSPOSON GAG-LIKE PROTEIN 4"/>
    <property type="match status" value="1"/>
</dbReference>
<dbReference type="SUPFAM" id="SSF57756">
    <property type="entry name" value="Retrovirus zinc finger-like domains"/>
    <property type="match status" value="1"/>
</dbReference>
<dbReference type="PROSITE" id="PS50158">
    <property type="entry name" value="ZF_CCHC"/>
    <property type="match status" value="1"/>
</dbReference>
<feature type="chain" id="PRO_0000257494" description="Retrotransposon Gag-like protein 4">
    <location>
        <begin position="1"/>
        <end position="310"/>
    </location>
</feature>
<feature type="zinc finger region" description="CCHC-type" evidence="2">
    <location>
        <begin position="278"/>
        <end position="295"/>
    </location>
</feature>
<feature type="sequence variant" id="VAR_028917" description="In dbSNP:rs6568050." evidence="3 4">
    <original>L</original>
    <variation>P</variation>
    <location>
        <position position="27"/>
    </location>
</feature>
<feature type="sequence variant" id="VAR_053756" description="In dbSNP:rs7474140.">
    <original>D</original>
    <variation>Y</variation>
    <location>
        <position position="162"/>
    </location>
</feature>
<gene>
    <name evidence="7" type="primary">RTL4</name>
    <name type="synonym">MAR3</name>
    <name evidence="1" type="synonym">MART4</name>
    <name evidence="6" type="synonym">ZCCHC16</name>
</gene>
<organism>
    <name type="scientific">Homo sapiens</name>
    <name type="common">Human</name>
    <dbReference type="NCBI Taxonomy" id="9606"/>
    <lineage>
        <taxon>Eukaryota</taxon>
        <taxon>Metazoa</taxon>
        <taxon>Chordata</taxon>
        <taxon>Craniata</taxon>
        <taxon>Vertebrata</taxon>
        <taxon>Euteleostomi</taxon>
        <taxon>Mammalia</taxon>
        <taxon>Eutheria</taxon>
        <taxon>Euarchontoglires</taxon>
        <taxon>Primates</taxon>
        <taxon>Haplorrhini</taxon>
        <taxon>Catarrhini</taxon>
        <taxon>Hominidae</taxon>
        <taxon>Homo</taxon>
    </lineage>
</organism>
<evidence type="ECO:0000250" key="1">
    <source>
        <dbReference type="UniProtKB" id="Q3URY0"/>
    </source>
</evidence>
<evidence type="ECO:0000255" key="2">
    <source>
        <dbReference type="PROSITE-ProRule" id="PRU00047"/>
    </source>
</evidence>
<evidence type="ECO:0000269" key="3">
    <source>
    </source>
</evidence>
<evidence type="ECO:0000269" key="4">
    <source>
    </source>
</evidence>
<evidence type="ECO:0000269" key="5">
    <source>
    </source>
</evidence>
<evidence type="ECO:0000305" key="6"/>
<evidence type="ECO:0000312" key="7">
    <source>
        <dbReference type="HGNC" id="HGNC:25214"/>
    </source>
</evidence>
<name>RTL4_HUMAN</name>